<organism>
    <name type="scientific">Lachesana tarabaevi</name>
    <name type="common">Spider</name>
    <dbReference type="NCBI Taxonomy" id="379576"/>
    <lineage>
        <taxon>Eukaryota</taxon>
        <taxon>Metazoa</taxon>
        <taxon>Ecdysozoa</taxon>
        <taxon>Arthropoda</taxon>
        <taxon>Chelicerata</taxon>
        <taxon>Arachnida</taxon>
        <taxon>Araneae</taxon>
        <taxon>Araneomorphae</taxon>
        <taxon>Entelegynae</taxon>
        <taxon>Entelegynae incertae sedis</taxon>
        <taxon>Zodariidae</taxon>
        <taxon>Lachesana</taxon>
    </lineage>
</organism>
<evidence type="ECO:0000255" key="1"/>
<evidence type="ECO:0000269" key="2">
    <source>
    </source>
</evidence>
<evidence type="ECO:0000269" key="3">
    <source>
    </source>
</evidence>
<evidence type="ECO:0000303" key="4">
    <source>
    </source>
</evidence>
<evidence type="ECO:0000303" key="5">
    <source>
    </source>
</evidence>
<evidence type="ECO:0000305" key="6"/>
<evidence type="ECO:0000305" key="7">
    <source>
    </source>
</evidence>
<evidence type="ECO:0007829" key="8">
    <source>
        <dbReference type="PDB" id="2PCO"/>
    </source>
</evidence>
<protein>
    <recommendedName>
        <fullName evidence="6">M-zodatoxin-Lt1a</fullName>
        <shortName evidence="6">M-ZDTX-Lt1a</shortName>
    </recommendedName>
    <alternativeName>
        <fullName evidence="4">Latarcin-1</fullName>
        <shortName evidence="4">Ltc-1</shortName>
        <shortName>Ltc1</shortName>
    </alternativeName>
</protein>
<proteinExistence type="evidence at protein level"/>
<dbReference type="EMBL" id="AM232700">
    <property type="protein sequence ID" value="CAJ81660.1"/>
    <property type="molecule type" value="mRNA"/>
</dbReference>
<dbReference type="PDB" id="2PCO">
    <property type="method" value="NMR"/>
    <property type="chains" value="A=63-88"/>
</dbReference>
<dbReference type="PDBsum" id="2PCO"/>
<dbReference type="BMRB" id="Q1ELT9"/>
<dbReference type="SMR" id="Q1ELT9"/>
<dbReference type="TCDB" id="1.C.138.1.3">
    <property type="family name" value="the m-zodatoxin-lt8a spider toxin (zst) family"/>
</dbReference>
<dbReference type="ArachnoServer" id="AS000049">
    <property type="toxin name" value="M-zodatoxin-Lt1a"/>
</dbReference>
<dbReference type="EvolutionaryTrace" id="Q1ELT9"/>
<dbReference type="GO" id="GO:0005576">
    <property type="term" value="C:extracellular region"/>
    <property type="evidence" value="ECO:0007669"/>
    <property type="project" value="UniProtKB-SubCell"/>
</dbReference>
<dbReference type="GO" id="GO:0090729">
    <property type="term" value="F:toxin activity"/>
    <property type="evidence" value="ECO:0007669"/>
    <property type="project" value="UniProtKB-KW"/>
</dbReference>
<dbReference type="GO" id="GO:0042742">
    <property type="term" value="P:defense response to bacterium"/>
    <property type="evidence" value="ECO:0007669"/>
    <property type="project" value="UniProtKB-KW"/>
</dbReference>
<dbReference type="GO" id="GO:0050832">
    <property type="term" value="P:defense response to fungus"/>
    <property type="evidence" value="ECO:0007669"/>
    <property type="project" value="UniProtKB-KW"/>
</dbReference>
<dbReference type="GO" id="GO:0031640">
    <property type="term" value="P:killing of cells of another organism"/>
    <property type="evidence" value="ECO:0007669"/>
    <property type="project" value="UniProtKB-KW"/>
</dbReference>
<dbReference type="InterPro" id="IPR018802">
    <property type="entry name" value="Latarcin_precursor"/>
</dbReference>
<dbReference type="Pfam" id="PF10279">
    <property type="entry name" value="Latarcin"/>
    <property type="match status" value="1"/>
</dbReference>
<reference key="1">
    <citation type="journal article" date="2006" name="J. Biol. Chem.">
        <title>Latarcins, antimicrobial and cytolytic peptides from the venom of the spider Lachesana tarabaevi (Zodariidae) that exemplify biomolecular diversity.</title>
        <authorList>
            <person name="Kozlov S.A."/>
            <person name="Vassilevski A.A."/>
            <person name="Feofanov A.V."/>
            <person name="Surovoy A.Y."/>
            <person name="Karpunin D.V."/>
            <person name="Grishin E.V."/>
        </authorList>
    </citation>
    <scope>NUCLEOTIDE SEQUENCE [MRNA]</scope>
    <scope>PROTEIN SEQUENCE OF 63-87</scope>
    <scope>SYNTHESIS OF 63-87</scope>
    <scope>FUNCTION</scope>
    <scope>SUBCELLULAR LOCATION</scope>
    <scope>MASS SPECTROMETRY</scope>
    <source>
        <tissue>Venom</tissue>
        <tissue>Venom gland</tissue>
    </source>
</reference>
<reference key="2">
    <citation type="journal article" date="2016" name="Biochem. J.">
        <title>Lachesana tarabaevi, an expert in membrane-active toxins.</title>
        <authorList>
            <person name="Kuzmenkov A.I."/>
            <person name="Sachkova M.Y."/>
            <person name="Kovalchuk S.I."/>
            <person name="Grishin E.V."/>
            <person name="Vassilevski A.A."/>
        </authorList>
    </citation>
    <scope>SUBCELLULAR LOCATION</scope>
    <scope>PQM MOTIF</scope>
    <scope>MASS SPECTROMETRY</scope>
    <source>
        <tissue>Venom</tissue>
    </source>
</reference>
<reference key="3">
    <citation type="journal article" date="2008" name="Biochemistry">
        <title>Three-dimensional structure/hydrophobicity of latarcins specifies their mode of membrane activity.</title>
        <authorList>
            <person name="Dubovskii P.V."/>
            <person name="Volynsky P.E."/>
            <person name="Polyansky A.A."/>
            <person name="Karpunin D.V."/>
            <person name="Chupin V.V."/>
            <person name="Efremov R.G."/>
            <person name="Arseniev A.S."/>
        </authorList>
    </citation>
    <scope>STRUCTURE BY NMR OF 63-88</scope>
</reference>
<name>LAT1_LACTA</name>
<accession>Q1ELT9</accession>
<keyword id="KW-0002">3D-structure</keyword>
<keyword id="KW-0044">Antibiotic</keyword>
<keyword id="KW-0929">Antimicrobial</keyword>
<keyword id="KW-0204">Cytolysis</keyword>
<keyword id="KW-0903">Direct protein sequencing</keyword>
<keyword id="KW-0295">Fungicide</keyword>
<keyword id="KW-0354">Hemolysis</keyword>
<keyword id="KW-0964">Secreted</keyword>
<keyword id="KW-0732">Signal</keyword>
<keyword id="KW-0800">Toxin</keyword>
<comment type="function">
    <text evidence="2">Has antimicrobial activity against Gram-positive bacteria (A.globiformis VKM Ac-1112 (MIC=0.5 uM), and B.subtilis VKM B-501 (MIC=1.0 uM)), Gram-negative bacteria (E.coli DH5-alpha (MIC=1.0 uM), E.coli MH1 (MIC=0.7 uM), and P.aeruginosa PAO1 (MIC=4.1 uM)), and yeasts (P.pastoris GS115 (MIC=17 uM), and S.cerevisiae Y190 (MIC&gt;33 uM)). Has a moderate hemolytic activity against rabbit erythrocytes. Causes paralysis, but is not lethal when injected into insect (M.domestica) larvae.</text>
</comment>
<comment type="subcellular location">
    <subcellularLocation>
        <location evidence="2 3">Secreted</location>
    </subcellularLocation>
</comment>
<comment type="tissue specificity">
    <text evidence="7">Expressed by the venom gland.</text>
</comment>
<comment type="domain">
    <text evidence="4">The mature peptide (63-87) probably forms alpha-helices which disrupt target cell membranes.</text>
</comment>
<comment type="PTM">
    <text evidence="5">Cleavage of the propeptide depends on the processing quadruplet motif (XXXR, with at least one of X being E).</text>
</comment>
<comment type="mass spectrometry" mass="3071.5" method="MALDI" evidence="2"/>
<comment type="mass spectrometry" mass="3074.0" method="MALDI" evidence="3"/>
<comment type="similarity">
    <text evidence="6">Belongs to the cationic peptide 03 (latarcin) family. 01 subfamily.</text>
</comment>
<sequence length="88" mass="10038">MKYFVVALALAVALVCIAESTAYDVNEELENELDDLSDAAWLAKAAEDLQALDDFEESEESRSMWSGMWRRKLKKLRNALKKKLKGEK</sequence>
<feature type="signal peptide" evidence="1">
    <location>
        <begin position="1"/>
        <end position="22"/>
    </location>
</feature>
<feature type="propeptide" id="PRO_0000249734" evidence="1 2">
    <location>
        <begin position="23"/>
        <end position="62"/>
    </location>
</feature>
<feature type="peptide" id="PRO_0000249735" description="M-zodatoxin-Lt1a">
    <location>
        <begin position="63"/>
        <end position="87"/>
    </location>
</feature>
<feature type="short sequence motif" description="Processing quadruplet motif" evidence="5">
    <location>
        <begin position="59"/>
        <end position="62"/>
    </location>
</feature>
<feature type="helix" evidence="8">
    <location>
        <begin position="70"/>
        <end position="85"/>
    </location>
</feature>